<proteinExistence type="inferred from homology"/>
<gene>
    <name type="primary">nagA</name>
    <name type="ordered locus">SO_3120</name>
</gene>
<sequence length="459" mass="51965">MHNIHRRHFLKAAGAVTAGLVTANIALNANASSVAPKPSSGKSVIGLIAPKMEVVRVGFIGVGERGFSHVEQFCHLEGVELKAICDTHQAVVDRAVEHIVKQKRPKPAVYTGNDLSYRELLNRDDIDIVIISTPWEWHAPMAIDTMESGKHAFVEVPLALTVEECWQIIDTAERTQKNCMMMENVNYGREELMVLNMVRQGLFGELLHGEAAYIHELRWQMKEINHKTGSWRTYWHTKRNGNLYPTHGLGPVSQYMNINRGDRFDYLTSMSSPALGRALYAKREFPADHERNQLKYINGDMSTSLIKTVKGRTIMVQHDTTTPRPYSRHNLIQGTNGVFAGFPNRIAVENDGFGTSYHKWDTDMQKWYDKYDHPLWQRIGKEAEINGGHGGMDFVMLWRMVYCLRNGEALDQDVYDGASWSVVNILSEQSLNNRSNSVNFPDFTRGAWEHAKPLGIVGA</sequence>
<accession>Q8ECL7</accession>
<organism>
    <name type="scientific">Shewanella oneidensis (strain ATCC 700550 / JCM 31522 / CIP 106686 / LMG 19005 / NCIMB 14063 / MR-1)</name>
    <dbReference type="NCBI Taxonomy" id="211586"/>
    <lineage>
        <taxon>Bacteria</taxon>
        <taxon>Pseudomonadati</taxon>
        <taxon>Pseudomonadota</taxon>
        <taxon>Gammaproteobacteria</taxon>
        <taxon>Alteromonadales</taxon>
        <taxon>Shewanellaceae</taxon>
        <taxon>Shewanella</taxon>
    </lineage>
</organism>
<protein>
    <recommendedName>
        <fullName>Alpha-N-acetylgalactosaminidase</fullName>
        <ecNumber>3.2.1.49</ecNumber>
    </recommendedName>
    <alternativeName>
        <fullName>Glycosyl hydrolase family 109 protein</fullName>
    </alternativeName>
</protein>
<keyword id="KW-0326">Glycosidase</keyword>
<keyword id="KW-0378">Hydrolase</keyword>
<keyword id="KW-0520">NAD</keyword>
<keyword id="KW-1185">Reference proteome</keyword>
<keyword id="KW-0732">Signal</keyword>
<reference key="1">
    <citation type="journal article" date="2007" name="Nat. Biotechnol.">
        <title>Bacterial glycosidases for the production of universal red blood cells.</title>
        <authorList>
            <person name="Liu Q.P."/>
            <person name="Sulzenbacher G."/>
            <person name="Yuan H."/>
            <person name="Bennett E.P."/>
            <person name="Pietz G."/>
            <person name="Saunders K."/>
            <person name="Spence J."/>
            <person name="Nudelman E."/>
            <person name="Levery S.B."/>
            <person name="White T."/>
            <person name="Neveu J.M."/>
            <person name="Lane W.S."/>
            <person name="Bourne Y."/>
            <person name="Olsson M.L."/>
            <person name="Henrissat B."/>
            <person name="Clausen H."/>
        </authorList>
    </citation>
    <scope>NUCLEOTIDE SEQUENCE [GENOMIC DNA]</scope>
    <scope>ENZYME ACTIVITY</scope>
    <source>
        <strain>ATCC 70050</strain>
    </source>
</reference>
<reference key="2">
    <citation type="journal article" date="2002" name="Nat. Biotechnol.">
        <title>Genome sequence of the dissimilatory metal ion-reducing bacterium Shewanella oneidensis.</title>
        <authorList>
            <person name="Heidelberg J.F."/>
            <person name="Paulsen I.T."/>
            <person name="Nelson K.E."/>
            <person name="Gaidos E.J."/>
            <person name="Nelson W.C."/>
            <person name="Read T.D."/>
            <person name="Eisen J.A."/>
            <person name="Seshadri R."/>
            <person name="Ward N.L."/>
            <person name="Methe B.A."/>
            <person name="Clayton R.A."/>
            <person name="Meyer T."/>
            <person name="Tsapin A."/>
            <person name="Scott J."/>
            <person name="Beanan M.J."/>
            <person name="Brinkac L.M."/>
            <person name="Daugherty S.C."/>
            <person name="DeBoy R.T."/>
            <person name="Dodson R.J."/>
            <person name="Durkin A.S."/>
            <person name="Haft D.H."/>
            <person name="Kolonay J.F."/>
            <person name="Madupu R."/>
            <person name="Peterson J.D."/>
            <person name="Umayam L.A."/>
            <person name="White O."/>
            <person name="Wolf A.M."/>
            <person name="Vamathevan J.J."/>
            <person name="Weidman J.F."/>
            <person name="Impraim M."/>
            <person name="Lee K."/>
            <person name="Berry K.J."/>
            <person name="Lee C."/>
            <person name="Mueller J."/>
            <person name="Khouri H.M."/>
            <person name="Gill J."/>
            <person name="Utterback T.R."/>
            <person name="McDonald L.A."/>
            <person name="Feldblyum T.V."/>
            <person name="Smith H.O."/>
            <person name="Venter J.C."/>
            <person name="Nealson K.H."/>
            <person name="Fraser C.M."/>
        </authorList>
    </citation>
    <scope>NUCLEOTIDE SEQUENCE [LARGE SCALE GENOMIC DNA]</scope>
    <source>
        <strain>ATCC 700550 / JCM 31522 / CIP 106686 / LMG 19005 / NCIMB 14063 / MR-1</strain>
    </source>
</reference>
<feature type="signal peptide" description="Tat-type signal" evidence="2">
    <location>
        <begin position="1"/>
        <end position="31"/>
    </location>
</feature>
<feature type="chain" id="PRO_0000348561" description="Alpha-N-acetylgalactosaminidase">
    <location>
        <begin position="32"/>
        <end position="459"/>
    </location>
</feature>
<feature type="binding site" evidence="1">
    <location>
        <begin position="64"/>
        <end position="65"/>
    </location>
    <ligand>
        <name>NAD(+)</name>
        <dbReference type="ChEBI" id="CHEBI:57540"/>
    </ligand>
</feature>
<feature type="binding site" evidence="1">
    <location>
        <position position="86"/>
    </location>
    <ligand>
        <name>NAD(+)</name>
        <dbReference type="ChEBI" id="CHEBI:57540"/>
    </ligand>
</feature>
<feature type="binding site" evidence="1">
    <location>
        <begin position="135"/>
        <end position="138"/>
    </location>
    <ligand>
        <name>NAD(+)</name>
        <dbReference type="ChEBI" id="CHEBI:57540"/>
    </ligand>
</feature>
<feature type="binding site" evidence="1">
    <location>
        <begin position="155"/>
        <end position="156"/>
    </location>
    <ligand>
        <name>NAD(+)</name>
        <dbReference type="ChEBI" id="CHEBI:57540"/>
    </ligand>
</feature>
<feature type="binding site" evidence="1">
    <location>
        <position position="184"/>
    </location>
    <ligand>
        <name>NAD(+)</name>
        <dbReference type="ChEBI" id="CHEBI:57540"/>
    </ligand>
</feature>
<feature type="binding site" evidence="1">
    <location>
        <position position="213"/>
    </location>
    <ligand>
        <name>substrate</name>
    </ligand>
</feature>
<feature type="binding site" evidence="1">
    <location>
        <position position="232"/>
    </location>
    <ligand>
        <name>substrate</name>
    </ligand>
</feature>
<feature type="binding site" evidence="1">
    <location>
        <begin position="244"/>
        <end position="247"/>
    </location>
    <ligand>
        <name>substrate</name>
    </ligand>
</feature>
<feature type="binding site" evidence="1">
    <location>
        <position position="244"/>
    </location>
    <ligand>
        <name>NAD(+)</name>
        <dbReference type="ChEBI" id="CHEBI:57540"/>
    </ligand>
</feature>
<feature type="binding site" evidence="1">
    <location>
        <position position="326"/>
    </location>
    <ligand>
        <name>substrate</name>
    </ligand>
</feature>
<name>GH109_SHEON</name>
<evidence type="ECO:0000250" key="1"/>
<evidence type="ECO:0000255" key="2">
    <source>
        <dbReference type="PROSITE-ProRule" id="PRU00648"/>
    </source>
</evidence>
<evidence type="ECO:0000269" key="3">
    <source>
    </source>
</evidence>
<evidence type="ECO:0000305" key="4"/>
<dbReference type="EC" id="3.2.1.49"/>
<dbReference type="EMBL" id="AM039445">
    <property type="protein sequence ID" value="CAJ01377.1"/>
    <property type="molecule type" value="Genomic_DNA"/>
</dbReference>
<dbReference type="EMBL" id="AE014299">
    <property type="protein sequence ID" value="AAN56125.1"/>
    <property type="molecule type" value="Genomic_DNA"/>
</dbReference>
<dbReference type="RefSeq" id="NP_718681.1">
    <property type="nucleotide sequence ID" value="NC_004347.2"/>
</dbReference>
<dbReference type="RefSeq" id="WP_011073016.1">
    <property type="nucleotide sequence ID" value="NC_004347.2"/>
</dbReference>
<dbReference type="SMR" id="Q8ECL7"/>
<dbReference type="STRING" id="211586.SO_3120"/>
<dbReference type="CAZy" id="GH109">
    <property type="family name" value="Glycoside Hydrolase Family 109"/>
</dbReference>
<dbReference type="PaxDb" id="211586-SO_3120"/>
<dbReference type="KEGG" id="son:SO_3120"/>
<dbReference type="PATRIC" id="fig|211586.12.peg.3020"/>
<dbReference type="eggNOG" id="COG0673">
    <property type="taxonomic scope" value="Bacteria"/>
</dbReference>
<dbReference type="HOGENOM" id="CLU_046965_0_0_6"/>
<dbReference type="OrthoDB" id="9792935at2"/>
<dbReference type="BioCyc" id="SONE211586:G1GMP-2891-MONOMER"/>
<dbReference type="Proteomes" id="UP000008186">
    <property type="component" value="Chromosome"/>
</dbReference>
<dbReference type="GO" id="GO:0008456">
    <property type="term" value="F:alpha-N-acetylgalactosaminidase activity"/>
    <property type="evidence" value="ECO:0007669"/>
    <property type="project" value="UniProtKB-EC"/>
</dbReference>
<dbReference type="GO" id="GO:0000166">
    <property type="term" value="F:nucleotide binding"/>
    <property type="evidence" value="ECO:0007669"/>
    <property type="project" value="InterPro"/>
</dbReference>
<dbReference type="Gene3D" id="3.30.360.10">
    <property type="entry name" value="Dihydrodipicolinate Reductase, domain 2"/>
    <property type="match status" value="1"/>
</dbReference>
<dbReference type="Gene3D" id="3.40.50.720">
    <property type="entry name" value="NAD(P)-binding Rossmann-like Domain"/>
    <property type="match status" value="1"/>
</dbReference>
<dbReference type="InterPro" id="IPR000683">
    <property type="entry name" value="Gfo/Idh/MocA-like_OxRdtase_N"/>
</dbReference>
<dbReference type="InterPro" id="IPR050463">
    <property type="entry name" value="Gfo/Idh/MocA_oxidrdct_glycsds"/>
</dbReference>
<dbReference type="InterPro" id="IPR049303">
    <property type="entry name" value="Glyco_hydro_109_C"/>
</dbReference>
<dbReference type="InterPro" id="IPR036291">
    <property type="entry name" value="NAD(P)-bd_dom_sf"/>
</dbReference>
<dbReference type="InterPro" id="IPR006311">
    <property type="entry name" value="TAT_signal"/>
</dbReference>
<dbReference type="InterPro" id="IPR019546">
    <property type="entry name" value="TAT_signal_bac_arc"/>
</dbReference>
<dbReference type="NCBIfam" id="TIGR01409">
    <property type="entry name" value="TAT_signal_seq"/>
    <property type="match status" value="1"/>
</dbReference>
<dbReference type="PANTHER" id="PTHR43818">
    <property type="entry name" value="BCDNA.GH03377"/>
    <property type="match status" value="1"/>
</dbReference>
<dbReference type="PANTHER" id="PTHR43818:SF1">
    <property type="entry name" value="GLYCOSYL HYDROLASE FAMILY 109 PROTEIN"/>
    <property type="match status" value="1"/>
</dbReference>
<dbReference type="Pfam" id="PF01408">
    <property type="entry name" value="GFO_IDH_MocA"/>
    <property type="match status" value="1"/>
</dbReference>
<dbReference type="Pfam" id="PF21252">
    <property type="entry name" value="Glyco_hydro_109_C"/>
    <property type="match status" value="1"/>
</dbReference>
<dbReference type="Pfam" id="PF10518">
    <property type="entry name" value="TAT_signal"/>
    <property type="match status" value="1"/>
</dbReference>
<dbReference type="SUPFAM" id="SSF51735">
    <property type="entry name" value="NAD(P)-binding Rossmann-fold domains"/>
    <property type="match status" value="1"/>
</dbReference>
<dbReference type="PROSITE" id="PS51318">
    <property type="entry name" value="TAT"/>
    <property type="match status" value="1"/>
</dbReference>
<comment type="function">
    <text>Glycosidase that has specific alpha-N-acetylgalactosaminidase activity.</text>
</comment>
<comment type="catalytic activity">
    <reaction evidence="3">
        <text>Cleavage of non-reducing alpha-(1-&gt;3)-N-acetylgalactosamine residues from human blood group A and AB mucin glycoproteins, Forssman hapten and blood group A lacto series glycolipids.</text>
        <dbReference type="EC" id="3.2.1.49"/>
    </reaction>
</comment>
<comment type="cofactor">
    <cofactor evidence="1">
        <name>NAD(+)</name>
        <dbReference type="ChEBI" id="CHEBI:57540"/>
    </cofactor>
    <text evidence="1">Binds 1 NAD(+) per subunit. The NAD(+) cannot dissociate.</text>
</comment>
<comment type="PTM">
    <text>Predicted to be exported by the Tat system. The position of the signal peptide cleavage has not been experimentally proven.</text>
</comment>
<comment type="similarity">
    <text evidence="4">Belongs to the Gfo/Idh/MocA family. Glycosyl hydrolase 109 subfamily.</text>
</comment>